<name>2ABD_DANRE</name>
<organism>
    <name type="scientific">Danio rerio</name>
    <name type="common">Zebrafish</name>
    <name type="synonym">Brachydanio rerio</name>
    <dbReference type="NCBI Taxonomy" id="7955"/>
    <lineage>
        <taxon>Eukaryota</taxon>
        <taxon>Metazoa</taxon>
        <taxon>Chordata</taxon>
        <taxon>Craniata</taxon>
        <taxon>Vertebrata</taxon>
        <taxon>Euteleostomi</taxon>
        <taxon>Actinopterygii</taxon>
        <taxon>Neopterygii</taxon>
        <taxon>Teleostei</taxon>
        <taxon>Ostariophysi</taxon>
        <taxon>Cypriniformes</taxon>
        <taxon>Danionidae</taxon>
        <taxon>Danioninae</taxon>
        <taxon>Danio</taxon>
    </lineage>
</organism>
<comment type="function">
    <text evidence="2 3">Substrate-recognition subunit of protein phosphatase 2A (PP2A) that plays a key role in cell cycle by controlling mitosis entry and exit (By similarity). The activity of PP2A complexes containing PPP2R2D (PR55-delta) fluctuate during the cell cycle: the activity is high in interphase and low in mitosis (By similarity).</text>
</comment>
<comment type="subunit">
    <text evidence="2">PP2A consists of a common heterodimeric core enzyme, composed of a 36 kDa catalytic subunit (subunit C) and a 65 kDa constant regulatory subunit (PR65 or subunit A), that associates with a variety of regulatory subunits.</text>
</comment>
<comment type="subcellular location">
    <subcellularLocation>
        <location evidence="1">Cytoplasm</location>
    </subcellularLocation>
</comment>
<comment type="similarity">
    <text evidence="4">Belongs to the phosphatase 2A regulatory subunit B family.</text>
</comment>
<keyword id="KW-0131">Cell cycle</keyword>
<keyword id="KW-0132">Cell division</keyword>
<keyword id="KW-0963">Cytoplasm</keyword>
<keyword id="KW-0498">Mitosis</keyword>
<keyword id="KW-1185">Reference proteome</keyword>
<keyword id="KW-0677">Repeat</keyword>
<keyword id="KW-0853">WD repeat</keyword>
<sequence>MAGVGGGNDFQWCFSQVKGAIDEDVAEADIISTVEFNYSGELLATGDKGGRVVIFQREQESKNRPLSRGEYNVYSTFQSHEPEFDYLKSLEIEEKINKIRWLPQQNAAHFLLSTNDKTIKLWKISERDKRAEGYNLKDEDGRLRDPFRITSLRVPVLMPMDLMVEASPRRIFANAHTYHINSISVNSDYETYLSADDLRINLWHLEITDRSFNIVDIKPANMEELTEVITAAECHPHQCNVFVYSSSKGTIRLCDMRAAALCDRHSKFFEEPEDPSSRSFFSEIISSISDVKFSHSGRYMMTRDYLSVKVWDLNMENRPVETYQVHEYLRSKLCSLYENDCIFDKFECCWNGSDSAIMTGSYNNFFRMFDRNTRRDITLEASRESSKPRAMLKPRKVCTGGKRKKDEISVDSLDFNKKILHTAWHPKENVIAVAATNNLYIFQDKMN</sequence>
<proteinExistence type="evidence at transcript level"/>
<feature type="chain" id="PRO_0000408324" description="Serine/threonine-protein phosphatase 2A 55 kDa regulatory subunit B delta isoform">
    <location>
        <begin position="1"/>
        <end position="447"/>
    </location>
</feature>
<feature type="repeat" description="WD 1">
    <location>
        <begin position="26"/>
        <end position="65"/>
    </location>
</feature>
<feature type="repeat" description="WD 2">
    <location>
        <begin position="91"/>
        <end position="132"/>
    </location>
</feature>
<feature type="repeat" description="WD 3">
    <location>
        <begin position="175"/>
        <end position="213"/>
    </location>
</feature>
<feature type="repeat" description="WD 4">
    <location>
        <begin position="224"/>
        <end position="264"/>
    </location>
</feature>
<feature type="repeat" description="WD 5">
    <location>
        <begin position="283"/>
        <end position="321"/>
    </location>
</feature>
<feature type="repeat" description="WD 6">
    <location>
        <begin position="338"/>
        <end position="379"/>
    </location>
</feature>
<feature type="repeat" description="WD 7">
    <location>
        <begin position="414"/>
        <end position="447"/>
    </location>
</feature>
<reference key="1">
    <citation type="submission" date="2004-03" db="EMBL/GenBank/DDBJ databases">
        <authorList>
            <consortium name="NIH - Zebrafish Gene Collection (ZGC) project"/>
        </authorList>
    </citation>
    <scope>NUCLEOTIDE SEQUENCE [LARGE SCALE MRNA]</scope>
    <source>
        <tissue>Embryo</tissue>
    </source>
</reference>
<accession>Q6NY64</accession>
<evidence type="ECO:0000250" key="1">
    <source>
        <dbReference type="UniProtKB" id="P56932"/>
    </source>
</evidence>
<evidence type="ECO:0000250" key="2">
    <source>
        <dbReference type="UniProtKB" id="Q7ZX64"/>
    </source>
</evidence>
<evidence type="ECO:0000250" key="3">
    <source>
        <dbReference type="UniProtKB" id="Q925E7"/>
    </source>
</evidence>
<evidence type="ECO:0000305" key="4"/>
<protein>
    <recommendedName>
        <fullName>Serine/threonine-protein phosphatase 2A 55 kDa regulatory subunit B delta isoform</fullName>
    </recommendedName>
    <alternativeName>
        <fullName>PP2A subunit B isoform B55-delta</fullName>
    </alternativeName>
    <alternativeName>
        <fullName>PP2A subunit B isoform PR55-delta</fullName>
    </alternativeName>
    <alternativeName>
        <fullName>PP2A subunit B isoform R2-delta</fullName>
    </alternativeName>
    <alternativeName>
        <fullName>PP2A subunit B isoform delta</fullName>
    </alternativeName>
</protein>
<gene>
    <name type="primary">ppp2r2d</name>
    <name type="ORF">zgc:76887</name>
</gene>
<dbReference type="EMBL" id="BC066723">
    <property type="protein sequence ID" value="AAH66723.1"/>
    <property type="molecule type" value="mRNA"/>
</dbReference>
<dbReference type="RefSeq" id="NP_998045.1">
    <property type="nucleotide sequence ID" value="NM_212880.2"/>
</dbReference>
<dbReference type="SMR" id="Q6NY64"/>
<dbReference type="FunCoup" id="Q6NY64">
    <property type="interactions" value="2387"/>
</dbReference>
<dbReference type="STRING" id="7955.ENSDARP00000131296"/>
<dbReference type="PaxDb" id="7955-ENSDARP00000099721"/>
<dbReference type="Ensembl" id="ENSDART00000172175">
    <property type="protein sequence ID" value="ENSDARP00000131091"/>
    <property type="gene ID" value="ENSDARG00000102009"/>
</dbReference>
<dbReference type="GeneID" id="405816"/>
<dbReference type="KEGG" id="dre:405816"/>
<dbReference type="AGR" id="ZFIN:ZDB-GENE-040426-2086"/>
<dbReference type="CTD" id="55844"/>
<dbReference type="ZFIN" id="ZDB-GENE-040426-2086">
    <property type="gene designation" value="ppp2r2d"/>
</dbReference>
<dbReference type="eggNOG" id="KOG1354">
    <property type="taxonomic scope" value="Eukaryota"/>
</dbReference>
<dbReference type="InParanoid" id="Q6NY64"/>
<dbReference type="OMA" id="LSHHDTI"/>
<dbReference type="OrthoDB" id="6274823at2759"/>
<dbReference type="PhylomeDB" id="Q6NY64"/>
<dbReference type="PRO" id="PR:Q6NY64"/>
<dbReference type="Proteomes" id="UP000000437">
    <property type="component" value="Chromosome 12"/>
</dbReference>
<dbReference type="Bgee" id="ENSDARG00000102009">
    <property type="expression patterns" value="Expressed in mature ovarian follicle and 26 other cell types or tissues"/>
</dbReference>
<dbReference type="ExpressionAtlas" id="Q6NY64">
    <property type="expression patterns" value="baseline"/>
</dbReference>
<dbReference type="GO" id="GO:0005829">
    <property type="term" value="C:cytosol"/>
    <property type="evidence" value="ECO:0000318"/>
    <property type="project" value="GO_Central"/>
</dbReference>
<dbReference type="GO" id="GO:0000159">
    <property type="term" value="C:protein phosphatase type 2A complex"/>
    <property type="evidence" value="ECO:0000250"/>
    <property type="project" value="UniProtKB"/>
</dbReference>
<dbReference type="GO" id="GO:0140767">
    <property type="term" value="F:enzyme-substrate adaptor activity"/>
    <property type="evidence" value="ECO:0000250"/>
    <property type="project" value="UniProtKB"/>
</dbReference>
<dbReference type="GO" id="GO:0019888">
    <property type="term" value="F:protein phosphatase regulator activity"/>
    <property type="evidence" value="ECO:0000250"/>
    <property type="project" value="UniProtKB"/>
</dbReference>
<dbReference type="GO" id="GO:0051301">
    <property type="term" value="P:cell division"/>
    <property type="evidence" value="ECO:0007669"/>
    <property type="project" value="UniProtKB-KW"/>
</dbReference>
<dbReference type="GO" id="GO:0010458">
    <property type="term" value="P:exit from mitosis"/>
    <property type="evidence" value="ECO:0000250"/>
    <property type="project" value="UniProtKB"/>
</dbReference>
<dbReference type="GO" id="GO:0000278">
    <property type="term" value="P:mitotic cell cycle"/>
    <property type="evidence" value="ECO:0000250"/>
    <property type="project" value="UniProtKB"/>
</dbReference>
<dbReference type="GO" id="GO:0007520">
    <property type="term" value="P:myoblast fusion"/>
    <property type="evidence" value="ECO:0000315"/>
    <property type="project" value="ZFIN"/>
</dbReference>
<dbReference type="GO" id="GO:0051983">
    <property type="term" value="P:regulation of chromosome segregation"/>
    <property type="evidence" value="ECO:0000250"/>
    <property type="project" value="UniProtKB"/>
</dbReference>
<dbReference type="FunFam" id="2.130.10.10:FF:000002">
    <property type="entry name" value="Serine/threonine-protein phosphatase 2A 55 kDa regulatory subunit B"/>
    <property type="match status" value="1"/>
</dbReference>
<dbReference type="Gene3D" id="2.130.10.10">
    <property type="entry name" value="YVTN repeat-like/Quinoprotein amine dehydrogenase"/>
    <property type="match status" value="1"/>
</dbReference>
<dbReference type="InterPro" id="IPR000009">
    <property type="entry name" value="PP2A_PR55"/>
</dbReference>
<dbReference type="InterPro" id="IPR018067">
    <property type="entry name" value="PP2A_PR55_CS"/>
</dbReference>
<dbReference type="InterPro" id="IPR015943">
    <property type="entry name" value="WD40/YVTN_repeat-like_dom_sf"/>
</dbReference>
<dbReference type="InterPro" id="IPR036322">
    <property type="entry name" value="WD40_repeat_dom_sf"/>
</dbReference>
<dbReference type="InterPro" id="IPR001680">
    <property type="entry name" value="WD40_rpt"/>
</dbReference>
<dbReference type="PANTHER" id="PTHR11871">
    <property type="entry name" value="PROTEIN PHOSPHATASE PP2A REGULATORY SUBUNIT B"/>
    <property type="match status" value="1"/>
</dbReference>
<dbReference type="PIRSF" id="PIRSF037309">
    <property type="entry name" value="PP2A_PR55"/>
    <property type="match status" value="1"/>
</dbReference>
<dbReference type="PRINTS" id="PR00600">
    <property type="entry name" value="PP2APR55"/>
</dbReference>
<dbReference type="SMART" id="SM00320">
    <property type="entry name" value="WD40"/>
    <property type="match status" value="7"/>
</dbReference>
<dbReference type="SUPFAM" id="SSF50978">
    <property type="entry name" value="WD40 repeat-like"/>
    <property type="match status" value="1"/>
</dbReference>
<dbReference type="PROSITE" id="PS01024">
    <property type="entry name" value="PR55_1"/>
    <property type="match status" value="1"/>
</dbReference>
<dbReference type="PROSITE" id="PS01025">
    <property type="entry name" value="PR55_2"/>
    <property type="match status" value="1"/>
</dbReference>